<feature type="chain" id="PRO_0000094932" description="Phosphatidylinositol-3-phosphate phosphatase MTMR1">
    <location>
        <begin position="1"/>
        <end position="665"/>
    </location>
</feature>
<feature type="domain" description="GRAM" evidence="3">
    <location>
        <begin position="90"/>
        <end position="161"/>
    </location>
</feature>
<feature type="domain" description="Myotubularin phosphatase" evidence="4">
    <location>
        <begin position="226"/>
        <end position="601"/>
    </location>
</feature>
<feature type="region of interest" description="Disordered" evidence="6">
    <location>
        <begin position="1"/>
        <end position="51"/>
    </location>
</feature>
<feature type="region of interest" description="Required for dimerization" evidence="8">
    <location>
        <begin position="608"/>
        <end position="665"/>
    </location>
</feature>
<feature type="region of interest" description="Disordered" evidence="6">
    <location>
        <begin position="642"/>
        <end position="665"/>
    </location>
</feature>
<feature type="compositionally biased region" description="Low complexity" evidence="6">
    <location>
        <begin position="1"/>
        <end position="11"/>
    </location>
</feature>
<feature type="compositionally biased region" description="Gly residues" evidence="6">
    <location>
        <begin position="12"/>
        <end position="24"/>
    </location>
</feature>
<feature type="compositionally biased region" description="Polar residues" evidence="6">
    <location>
        <begin position="39"/>
        <end position="51"/>
    </location>
</feature>
<feature type="compositionally biased region" description="Low complexity" evidence="6">
    <location>
        <begin position="645"/>
        <end position="657"/>
    </location>
</feature>
<feature type="active site" description="Phosphocysteine intermediate" evidence="5 11">
    <location>
        <position position="438"/>
    </location>
</feature>
<feature type="binding site" evidence="1">
    <location>
        <position position="351"/>
    </location>
    <ligand>
        <name>a 1,2-diacyl-sn-glycero-3-phospho-(1D-myo-inositol-3-phosphate)</name>
        <dbReference type="ChEBI" id="CHEBI:58088"/>
    </ligand>
</feature>
<feature type="binding site" evidence="1">
    <location>
        <position position="376"/>
    </location>
    <ligand>
        <name>a 1,2-diacyl-sn-glycero-3-phospho-(1D-myo-inositol-3-phosphate)</name>
        <dbReference type="ChEBI" id="CHEBI:58088"/>
    </ligand>
</feature>
<feature type="binding site" evidence="1">
    <location>
        <position position="377"/>
    </location>
    <ligand>
        <name>a 1,2-diacyl-sn-glycero-3-phospho-(1D-myo-inositol-3-phosphate)</name>
        <dbReference type="ChEBI" id="CHEBI:58088"/>
    </ligand>
</feature>
<feature type="binding site" evidence="1">
    <location>
        <position position="439"/>
    </location>
    <ligand>
        <name>a 1,2-diacyl-sn-glycero-3-phospho-(1D-myo-inositol-3-phosphate)</name>
        <dbReference type="ChEBI" id="CHEBI:58088"/>
    </ligand>
</feature>
<feature type="binding site" evidence="8 13">
    <location>
        <position position="439"/>
    </location>
    <ligand>
        <name>phosphate</name>
        <dbReference type="ChEBI" id="CHEBI:43474"/>
    </ligand>
</feature>
<feature type="binding site" evidence="1">
    <location>
        <position position="440"/>
    </location>
    <ligand>
        <name>a 1,2-diacyl-sn-glycero-3-phospho-(1D-myo-inositol-3-phosphate)</name>
        <dbReference type="ChEBI" id="CHEBI:58088"/>
    </ligand>
</feature>
<feature type="binding site" evidence="1">
    <location>
        <position position="441"/>
    </location>
    <ligand>
        <name>a 1,2-diacyl-sn-glycero-3-phospho-(1D-myo-inositol-3-phosphate)</name>
        <dbReference type="ChEBI" id="CHEBI:58088"/>
    </ligand>
</feature>
<feature type="binding site" evidence="8 13">
    <location>
        <position position="441"/>
    </location>
    <ligand>
        <name>phosphate</name>
        <dbReference type="ChEBI" id="CHEBI:43474"/>
    </ligand>
</feature>
<feature type="binding site" evidence="1">
    <location>
        <position position="442"/>
    </location>
    <ligand>
        <name>a 1,2-diacyl-sn-glycero-3-phospho-(1D-myo-inositol-3-phosphate)</name>
        <dbReference type="ChEBI" id="CHEBI:58088"/>
    </ligand>
</feature>
<feature type="binding site" evidence="8 13">
    <location>
        <position position="442"/>
    </location>
    <ligand>
        <name>phosphate</name>
        <dbReference type="ChEBI" id="CHEBI:43474"/>
    </ligand>
</feature>
<feature type="binding site" evidence="1">
    <location>
        <position position="443"/>
    </location>
    <ligand>
        <name>a 1,2-diacyl-sn-glycero-3-phospho-(1D-myo-inositol-3-phosphate)</name>
        <dbReference type="ChEBI" id="CHEBI:58088"/>
    </ligand>
</feature>
<feature type="binding site" evidence="8 13">
    <location>
        <position position="443"/>
    </location>
    <ligand>
        <name>phosphate</name>
        <dbReference type="ChEBI" id="CHEBI:43474"/>
    </ligand>
</feature>
<feature type="binding site" evidence="1">
    <location>
        <position position="444"/>
    </location>
    <ligand>
        <name>a 1,2-diacyl-sn-glycero-3-phospho-(1D-myo-inositol-3-phosphate)</name>
        <dbReference type="ChEBI" id="CHEBI:58088"/>
    </ligand>
</feature>
<feature type="binding site" evidence="8 13">
    <location>
        <position position="444"/>
    </location>
    <ligand>
        <name>phosphate</name>
        <dbReference type="ChEBI" id="CHEBI:43474"/>
    </ligand>
</feature>
<feature type="binding site" evidence="1">
    <location>
        <position position="484"/>
    </location>
    <ligand>
        <name>a 1,2-diacyl-sn-glycero-3-phospho-(1D-myo-inositol-3-phosphate)</name>
        <dbReference type="ChEBI" id="CHEBI:58088"/>
    </ligand>
</feature>
<feature type="modified residue" description="N-acetylmethionine" evidence="14">
    <location>
        <position position="1"/>
    </location>
</feature>
<feature type="modified residue" description="Phosphoserine" evidence="15">
    <location>
        <position position="43"/>
    </location>
</feature>
<feature type="modified residue" description="Phosphoserine" evidence="2">
    <location>
        <position position="49"/>
    </location>
</feature>
<feature type="splice variant" id="VSP_005169" description="In isoform 1A." evidence="9">
    <original>DVYTKTISLWSYINSQ</original>
    <variation>AWGAGTQRARGSLRSR</variation>
    <location>
        <begin position="553"/>
        <end position="568"/>
    </location>
</feature>
<feature type="splice variant" id="VSP_005170" description="In isoform 1A." evidence="9">
    <location>
        <begin position="569"/>
        <end position="665"/>
    </location>
</feature>
<feature type="mutagenesis site" description="Abolishes enzyme activity." evidence="8">
    <original>C</original>
    <variation>S</variation>
    <location>
        <position position="438"/>
    </location>
</feature>
<feature type="mutagenesis site" description="Abolishes enzyme activity." evidence="8">
    <original>D</original>
    <variation>A</variation>
    <location>
        <position position="443"/>
    </location>
</feature>
<feature type="mutagenesis site" description="Abolishes enzyme activity with phosphatidylinositol 3-phosphate. Reduces activity with phosphatidylinositol (3,5)-bisphosphate." evidence="8">
    <original>R</original>
    <variation>A</variation>
    <location>
        <position position="444"/>
    </location>
</feature>
<feature type="mutagenesis site" description="Abolishes enzyme activity." evidence="8">
    <original>R</original>
    <variation>A</variation>
    <location>
        <position position="484"/>
    </location>
</feature>
<feature type="sequence conflict" description="In Ref. 4; CAA12271." evidence="9" ref="4">
    <original>F</original>
    <variation>L</variation>
    <location>
        <position position="541"/>
    </location>
</feature>
<feature type="strand" evidence="16">
    <location>
        <begin position="106"/>
        <end position="116"/>
    </location>
</feature>
<feature type="strand" evidence="16">
    <location>
        <begin position="118"/>
        <end position="120"/>
    </location>
</feature>
<feature type="strand" evidence="16">
    <location>
        <begin position="122"/>
        <end position="138"/>
    </location>
</feature>
<feature type="strand" evidence="16">
    <location>
        <begin position="145"/>
        <end position="150"/>
    </location>
</feature>
<feature type="helix" evidence="16">
    <location>
        <begin position="151"/>
        <end position="153"/>
    </location>
</feature>
<feature type="strand" evidence="16">
    <location>
        <begin position="154"/>
        <end position="159"/>
    </location>
</feature>
<feature type="strand" evidence="16">
    <location>
        <begin position="172"/>
        <end position="179"/>
    </location>
</feature>
<feature type="strand" evidence="16">
    <location>
        <begin position="181"/>
        <end position="185"/>
    </location>
</feature>
<feature type="helix" evidence="16">
    <location>
        <begin position="196"/>
        <end position="204"/>
    </location>
</feature>
<feature type="helix" evidence="16">
    <location>
        <begin position="206"/>
        <end position="208"/>
    </location>
</feature>
<feature type="helix" evidence="16">
    <location>
        <begin position="214"/>
        <end position="217"/>
    </location>
</feature>
<feature type="helix" evidence="16">
    <location>
        <begin position="226"/>
        <end position="228"/>
    </location>
</feature>
<feature type="helix" evidence="16">
    <location>
        <begin position="232"/>
        <end position="238"/>
    </location>
</feature>
<feature type="strand" evidence="16">
    <location>
        <begin position="244"/>
        <end position="249"/>
    </location>
</feature>
<feature type="turn" evidence="16">
    <location>
        <begin position="251"/>
        <end position="254"/>
    </location>
</feature>
<feature type="strand" evidence="16">
    <location>
        <begin position="255"/>
        <end position="257"/>
    </location>
</feature>
<feature type="strand" evidence="16">
    <location>
        <begin position="265"/>
        <end position="268"/>
    </location>
</feature>
<feature type="helix" evidence="16">
    <location>
        <begin position="273"/>
        <end position="281"/>
    </location>
</feature>
<feature type="helix" evidence="16">
    <location>
        <begin position="284"/>
        <end position="286"/>
    </location>
</feature>
<feature type="strand" evidence="16">
    <location>
        <begin position="290"/>
        <end position="294"/>
    </location>
</feature>
<feature type="turn" evidence="16">
    <location>
        <begin position="296"/>
        <end position="298"/>
    </location>
</feature>
<feature type="strand" evidence="16">
    <location>
        <begin position="301"/>
        <end position="305"/>
    </location>
</feature>
<feature type="turn" evidence="16">
    <location>
        <begin position="311"/>
        <end position="314"/>
    </location>
</feature>
<feature type="helix" evidence="16">
    <location>
        <begin position="318"/>
        <end position="329"/>
    </location>
</feature>
<feature type="strand" evidence="16">
    <location>
        <begin position="337"/>
        <end position="343"/>
    </location>
</feature>
<feature type="helix" evidence="16">
    <location>
        <begin position="345"/>
        <end position="353"/>
    </location>
</feature>
<feature type="turn" evidence="16">
    <location>
        <begin position="361"/>
        <end position="363"/>
    </location>
</feature>
<feature type="strand" evidence="16">
    <location>
        <begin position="367"/>
        <end position="374"/>
    </location>
</feature>
<feature type="helix" evidence="16">
    <location>
        <begin position="377"/>
        <end position="391"/>
    </location>
</feature>
<feature type="helix" evidence="16">
    <location>
        <begin position="397"/>
        <end position="399"/>
    </location>
</feature>
<feature type="helix" evidence="16">
    <location>
        <begin position="400"/>
        <end position="407"/>
    </location>
</feature>
<feature type="helix" evidence="16">
    <location>
        <begin position="409"/>
        <end position="428"/>
    </location>
</feature>
<feature type="strand" evidence="16">
    <location>
        <begin position="434"/>
        <end position="437"/>
    </location>
</feature>
<feature type="strand" evidence="16">
    <location>
        <begin position="439"/>
        <end position="443"/>
    </location>
</feature>
<feature type="helix" evidence="16">
    <location>
        <begin position="444"/>
        <end position="456"/>
    </location>
</feature>
<feature type="helix" evidence="16">
    <location>
        <begin position="458"/>
        <end position="461"/>
    </location>
</feature>
<feature type="helix" evidence="16">
    <location>
        <begin position="463"/>
        <end position="473"/>
    </location>
</feature>
<feature type="turn" evidence="16">
    <location>
        <begin position="474"/>
        <end position="478"/>
    </location>
</feature>
<feature type="helix" evidence="16">
    <location>
        <begin position="481"/>
        <end position="485"/>
    </location>
</feature>
<feature type="turn" evidence="16">
    <location>
        <begin position="486"/>
        <end position="488"/>
    </location>
</feature>
<feature type="helix" evidence="16">
    <location>
        <begin position="500"/>
        <end position="514"/>
    </location>
</feature>
<feature type="turn" evidence="16">
    <location>
        <begin position="516"/>
        <end position="518"/>
    </location>
</feature>
<feature type="helix" evidence="16">
    <location>
        <begin position="523"/>
        <end position="535"/>
    </location>
</feature>
<feature type="strand" evidence="16">
    <location>
        <begin position="543"/>
        <end position="545"/>
    </location>
</feature>
<feature type="helix" evidence="16">
    <location>
        <begin position="546"/>
        <end position="551"/>
    </location>
</feature>
<feature type="helix" evidence="16">
    <location>
        <begin position="554"/>
        <end position="557"/>
    </location>
</feature>
<feature type="helix" evidence="16">
    <location>
        <begin position="561"/>
        <end position="567"/>
    </location>
</feature>
<feature type="helix" evidence="16">
    <location>
        <begin position="568"/>
        <end position="572"/>
    </location>
</feature>
<feature type="helix" evidence="16">
    <location>
        <begin position="591"/>
        <end position="593"/>
    </location>
</feature>
<feature type="helix" evidence="16">
    <location>
        <begin position="598"/>
        <end position="601"/>
    </location>
</feature>
<feature type="turn" evidence="16">
    <location>
        <begin position="602"/>
        <end position="604"/>
    </location>
</feature>
<organism>
    <name type="scientific">Homo sapiens</name>
    <name type="common">Human</name>
    <dbReference type="NCBI Taxonomy" id="9606"/>
    <lineage>
        <taxon>Eukaryota</taxon>
        <taxon>Metazoa</taxon>
        <taxon>Chordata</taxon>
        <taxon>Craniata</taxon>
        <taxon>Vertebrata</taxon>
        <taxon>Euteleostomi</taxon>
        <taxon>Mammalia</taxon>
        <taxon>Eutheria</taxon>
        <taxon>Euarchontoglires</taxon>
        <taxon>Primates</taxon>
        <taxon>Haplorrhini</taxon>
        <taxon>Catarrhini</taxon>
        <taxon>Hominidae</taxon>
        <taxon>Homo</taxon>
    </lineage>
</organism>
<reference key="1">
    <citation type="journal article" date="1998" name="Genomics">
        <title>Genomic organization of a 225-kb region in Xq28 containing the gene for X-linked myotubular myopathy (MTM1) and a related gene (MTMR1).</title>
        <authorList>
            <person name="Kioschis P."/>
            <person name="Wiemann S."/>
            <person name="Heiss N.S."/>
            <person name="Francis F."/>
            <person name="Goetz C."/>
            <person name="Poustka A."/>
            <person name="Taudien S."/>
            <person name="Platzer M."/>
            <person name="Wiehe T."/>
            <person name="Beckmann G."/>
            <person name="Weber J."/>
            <person name="Nordsiek G."/>
            <person name="Rosenthal A."/>
        </authorList>
    </citation>
    <scope>NUCLEOTIDE SEQUENCE [GENOMIC DNA]</scope>
    <scope>ALTERNATIVE SPLICING</scope>
</reference>
<reference key="2">
    <citation type="journal article" date="2005" name="Nature">
        <title>The DNA sequence of the human X chromosome.</title>
        <authorList>
            <person name="Ross M.T."/>
            <person name="Grafham D.V."/>
            <person name="Coffey A.J."/>
            <person name="Scherer S."/>
            <person name="McLay K."/>
            <person name="Muzny D."/>
            <person name="Platzer M."/>
            <person name="Howell G.R."/>
            <person name="Burrows C."/>
            <person name="Bird C.P."/>
            <person name="Frankish A."/>
            <person name="Lovell F.L."/>
            <person name="Howe K.L."/>
            <person name="Ashurst J.L."/>
            <person name="Fulton R.S."/>
            <person name="Sudbrak R."/>
            <person name="Wen G."/>
            <person name="Jones M.C."/>
            <person name="Hurles M.E."/>
            <person name="Andrews T.D."/>
            <person name="Scott C.E."/>
            <person name="Searle S."/>
            <person name="Ramser J."/>
            <person name="Whittaker A."/>
            <person name="Deadman R."/>
            <person name="Carter N.P."/>
            <person name="Hunt S.E."/>
            <person name="Chen R."/>
            <person name="Cree A."/>
            <person name="Gunaratne P."/>
            <person name="Havlak P."/>
            <person name="Hodgson A."/>
            <person name="Metzker M.L."/>
            <person name="Richards S."/>
            <person name="Scott G."/>
            <person name="Steffen D."/>
            <person name="Sodergren E."/>
            <person name="Wheeler D.A."/>
            <person name="Worley K.C."/>
            <person name="Ainscough R."/>
            <person name="Ambrose K.D."/>
            <person name="Ansari-Lari M.A."/>
            <person name="Aradhya S."/>
            <person name="Ashwell R.I."/>
            <person name="Babbage A.K."/>
            <person name="Bagguley C.L."/>
            <person name="Ballabio A."/>
            <person name="Banerjee R."/>
            <person name="Barker G.E."/>
            <person name="Barlow K.F."/>
            <person name="Barrett I.P."/>
            <person name="Bates K.N."/>
            <person name="Beare D.M."/>
            <person name="Beasley H."/>
            <person name="Beasley O."/>
            <person name="Beck A."/>
            <person name="Bethel G."/>
            <person name="Blechschmidt K."/>
            <person name="Brady N."/>
            <person name="Bray-Allen S."/>
            <person name="Bridgeman A.M."/>
            <person name="Brown A.J."/>
            <person name="Brown M.J."/>
            <person name="Bonnin D."/>
            <person name="Bruford E.A."/>
            <person name="Buhay C."/>
            <person name="Burch P."/>
            <person name="Burford D."/>
            <person name="Burgess J."/>
            <person name="Burrill W."/>
            <person name="Burton J."/>
            <person name="Bye J.M."/>
            <person name="Carder C."/>
            <person name="Carrel L."/>
            <person name="Chako J."/>
            <person name="Chapman J.C."/>
            <person name="Chavez D."/>
            <person name="Chen E."/>
            <person name="Chen G."/>
            <person name="Chen Y."/>
            <person name="Chen Z."/>
            <person name="Chinault C."/>
            <person name="Ciccodicola A."/>
            <person name="Clark S.Y."/>
            <person name="Clarke G."/>
            <person name="Clee C.M."/>
            <person name="Clegg S."/>
            <person name="Clerc-Blankenburg K."/>
            <person name="Clifford K."/>
            <person name="Cobley V."/>
            <person name="Cole C.G."/>
            <person name="Conquer J.S."/>
            <person name="Corby N."/>
            <person name="Connor R.E."/>
            <person name="David R."/>
            <person name="Davies J."/>
            <person name="Davis C."/>
            <person name="Davis J."/>
            <person name="Delgado O."/>
            <person name="Deshazo D."/>
            <person name="Dhami P."/>
            <person name="Ding Y."/>
            <person name="Dinh H."/>
            <person name="Dodsworth S."/>
            <person name="Draper H."/>
            <person name="Dugan-Rocha S."/>
            <person name="Dunham A."/>
            <person name="Dunn M."/>
            <person name="Durbin K.J."/>
            <person name="Dutta I."/>
            <person name="Eades T."/>
            <person name="Ellwood M."/>
            <person name="Emery-Cohen A."/>
            <person name="Errington H."/>
            <person name="Evans K.L."/>
            <person name="Faulkner L."/>
            <person name="Francis F."/>
            <person name="Frankland J."/>
            <person name="Fraser A.E."/>
            <person name="Galgoczy P."/>
            <person name="Gilbert J."/>
            <person name="Gill R."/>
            <person name="Gloeckner G."/>
            <person name="Gregory S.G."/>
            <person name="Gribble S."/>
            <person name="Griffiths C."/>
            <person name="Grocock R."/>
            <person name="Gu Y."/>
            <person name="Gwilliam R."/>
            <person name="Hamilton C."/>
            <person name="Hart E.A."/>
            <person name="Hawes A."/>
            <person name="Heath P.D."/>
            <person name="Heitmann K."/>
            <person name="Hennig S."/>
            <person name="Hernandez J."/>
            <person name="Hinzmann B."/>
            <person name="Ho S."/>
            <person name="Hoffs M."/>
            <person name="Howden P.J."/>
            <person name="Huckle E.J."/>
            <person name="Hume J."/>
            <person name="Hunt P.J."/>
            <person name="Hunt A.R."/>
            <person name="Isherwood J."/>
            <person name="Jacob L."/>
            <person name="Johnson D."/>
            <person name="Jones S."/>
            <person name="de Jong P.J."/>
            <person name="Joseph S.S."/>
            <person name="Keenan S."/>
            <person name="Kelly S."/>
            <person name="Kershaw J.K."/>
            <person name="Khan Z."/>
            <person name="Kioschis P."/>
            <person name="Klages S."/>
            <person name="Knights A.J."/>
            <person name="Kosiura A."/>
            <person name="Kovar-Smith C."/>
            <person name="Laird G.K."/>
            <person name="Langford C."/>
            <person name="Lawlor S."/>
            <person name="Leversha M."/>
            <person name="Lewis L."/>
            <person name="Liu W."/>
            <person name="Lloyd C."/>
            <person name="Lloyd D.M."/>
            <person name="Loulseged H."/>
            <person name="Loveland J.E."/>
            <person name="Lovell J.D."/>
            <person name="Lozado R."/>
            <person name="Lu J."/>
            <person name="Lyne R."/>
            <person name="Ma J."/>
            <person name="Maheshwari M."/>
            <person name="Matthews L.H."/>
            <person name="McDowall J."/>
            <person name="McLaren S."/>
            <person name="McMurray A."/>
            <person name="Meidl P."/>
            <person name="Meitinger T."/>
            <person name="Milne S."/>
            <person name="Miner G."/>
            <person name="Mistry S.L."/>
            <person name="Morgan M."/>
            <person name="Morris S."/>
            <person name="Mueller I."/>
            <person name="Mullikin J.C."/>
            <person name="Nguyen N."/>
            <person name="Nordsiek G."/>
            <person name="Nyakatura G."/>
            <person name="O'dell C.N."/>
            <person name="Okwuonu G."/>
            <person name="Palmer S."/>
            <person name="Pandian R."/>
            <person name="Parker D."/>
            <person name="Parrish J."/>
            <person name="Pasternak S."/>
            <person name="Patel D."/>
            <person name="Pearce A.V."/>
            <person name="Pearson D.M."/>
            <person name="Pelan S.E."/>
            <person name="Perez L."/>
            <person name="Porter K.M."/>
            <person name="Ramsey Y."/>
            <person name="Reichwald K."/>
            <person name="Rhodes S."/>
            <person name="Ridler K.A."/>
            <person name="Schlessinger D."/>
            <person name="Schueler M.G."/>
            <person name="Sehra H.K."/>
            <person name="Shaw-Smith C."/>
            <person name="Shen H."/>
            <person name="Sheridan E.M."/>
            <person name="Shownkeen R."/>
            <person name="Skuce C.D."/>
            <person name="Smith M.L."/>
            <person name="Sotheran E.C."/>
            <person name="Steingruber H.E."/>
            <person name="Steward C.A."/>
            <person name="Storey R."/>
            <person name="Swann R.M."/>
            <person name="Swarbreck D."/>
            <person name="Tabor P.E."/>
            <person name="Taudien S."/>
            <person name="Taylor T."/>
            <person name="Teague B."/>
            <person name="Thomas K."/>
            <person name="Thorpe A."/>
            <person name="Timms K."/>
            <person name="Tracey A."/>
            <person name="Trevanion S."/>
            <person name="Tromans A.C."/>
            <person name="d'Urso M."/>
            <person name="Verduzco D."/>
            <person name="Villasana D."/>
            <person name="Waldron L."/>
            <person name="Wall M."/>
            <person name="Wang Q."/>
            <person name="Warren J."/>
            <person name="Warry G.L."/>
            <person name="Wei X."/>
            <person name="West A."/>
            <person name="Whitehead S.L."/>
            <person name="Whiteley M.N."/>
            <person name="Wilkinson J.E."/>
            <person name="Willey D.L."/>
            <person name="Williams G."/>
            <person name="Williams L."/>
            <person name="Williamson A."/>
            <person name="Williamson H."/>
            <person name="Wilming L."/>
            <person name="Woodmansey R.L."/>
            <person name="Wray P.W."/>
            <person name="Yen J."/>
            <person name="Zhang J."/>
            <person name="Zhou J."/>
            <person name="Zoghbi H."/>
            <person name="Zorilla S."/>
            <person name="Buck D."/>
            <person name="Reinhardt R."/>
            <person name="Poustka A."/>
            <person name="Rosenthal A."/>
            <person name="Lehrach H."/>
            <person name="Meindl A."/>
            <person name="Minx P.J."/>
            <person name="Hillier L.W."/>
            <person name="Willard H.F."/>
            <person name="Wilson R.K."/>
            <person name="Waterston R.H."/>
            <person name="Rice C.M."/>
            <person name="Vaudin M."/>
            <person name="Coulson A."/>
            <person name="Nelson D.L."/>
            <person name="Weinstock G."/>
            <person name="Sulston J.E."/>
            <person name="Durbin R.M."/>
            <person name="Hubbard T."/>
            <person name="Gibbs R.A."/>
            <person name="Beck S."/>
            <person name="Rogers J."/>
            <person name="Bentley D.R."/>
        </authorList>
    </citation>
    <scope>NUCLEOTIDE SEQUENCE [LARGE SCALE GENOMIC DNA]</scope>
</reference>
<reference key="3">
    <citation type="submission" date="2005-07" db="EMBL/GenBank/DDBJ databases">
        <authorList>
            <person name="Mural R.J."/>
            <person name="Istrail S."/>
            <person name="Sutton G.G."/>
            <person name="Florea L."/>
            <person name="Halpern A.L."/>
            <person name="Mobarry C.M."/>
            <person name="Lippert R."/>
            <person name="Walenz B."/>
            <person name="Shatkay H."/>
            <person name="Dew I."/>
            <person name="Miller J.R."/>
            <person name="Flanigan M.J."/>
            <person name="Edwards N.J."/>
            <person name="Bolanos R."/>
            <person name="Fasulo D."/>
            <person name="Halldorsson B.V."/>
            <person name="Hannenhalli S."/>
            <person name="Turner R."/>
            <person name="Yooseph S."/>
            <person name="Lu F."/>
            <person name="Nusskern D.R."/>
            <person name="Shue B.C."/>
            <person name="Zheng X.H."/>
            <person name="Zhong F."/>
            <person name="Delcher A.L."/>
            <person name="Huson D.H."/>
            <person name="Kravitz S.A."/>
            <person name="Mouchard L."/>
            <person name="Reinert K."/>
            <person name="Remington K.A."/>
            <person name="Clark A.G."/>
            <person name="Waterman M.S."/>
            <person name="Eichler E.E."/>
            <person name="Adams M.D."/>
            <person name="Hunkapiller M.W."/>
            <person name="Myers E.W."/>
            <person name="Venter J.C."/>
        </authorList>
    </citation>
    <scope>NUCLEOTIDE SEQUENCE [LARGE SCALE GENOMIC DNA]</scope>
</reference>
<reference key="4">
    <citation type="submission" date="1998-03" db="EMBL/GenBank/DDBJ databases">
        <title>Ancient genomic duplication within the myotubular myopathy locus (MTM1) in human Xq28.</title>
        <authorList>
            <person name="Kioschis P."/>
            <person name="Wiemann S."/>
            <person name="Francis F."/>
            <person name="Goetz C."/>
            <person name="Poustka A."/>
            <person name="Taudien S."/>
            <person name="Platzer M."/>
            <person name="Wiehe T."/>
            <person name="Beckmann G."/>
            <person name="Weber J."/>
            <person name="Nordsiek G."/>
            <person name="Rosenthal A."/>
        </authorList>
    </citation>
    <scope>NUCLEOTIDE SEQUENCE [MRNA] OF 4-665</scope>
    <source>
        <tissue>Brain</tissue>
    </source>
</reference>
<reference key="5">
    <citation type="journal article" date="1998" name="Hum. Mol. Genet.">
        <title>Characterization of the myotubularin dual specificity phosphatase gene family from yeast to human.</title>
        <authorList>
            <person name="Laporte J."/>
            <person name="Blondeau F."/>
            <person name="Buj-Bello A."/>
            <person name="Tentler D."/>
            <person name="Kretz C."/>
            <person name="Dahl N."/>
            <person name="Mandel J.-L."/>
        </authorList>
    </citation>
    <scope>NUCLEOTIDE SEQUENCE [MRNA] OF 114-610</scope>
</reference>
<reference key="6">
    <citation type="journal article" date="1996" name="Nat. Genet.">
        <title>A gene mutated in X-linked myotubular myopathy defines a new putative tyrosine phosphatase family conserved in yeast.</title>
        <authorList>
            <person name="Laporte J."/>
            <person name="Hu L.-J."/>
            <person name="Kretz C."/>
            <person name="Mandel J.-L."/>
            <person name="Kioschis P."/>
            <person name="Coy J."/>
            <person name="Klauck S.M."/>
            <person name="Poutska A."/>
            <person name="Dahl N."/>
        </authorList>
    </citation>
    <scope>NUCLEOTIDE SEQUENCE [MRNA] OF 404-535</scope>
</reference>
<reference key="7">
    <citation type="journal article" date="2002" name="J. Biol. Chem.">
        <title>Myotubularin and MTMR2, phosphatidylinositol 3-phosphatases mutated in myotubular myopathy and type 4B Charcot-Marie-Tooth disease.</title>
        <authorList>
            <person name="Kim S.A."/>
            <person name="Taylor G.S."/>
            <person name="Torgersen K.M."/>
            <person name="Dixon J.E."/>
        </authorList>
    </citation>
    <scope>FUNCTION</scope>
    <scope>CATALYTIC ACTIVITY</scope>
</reference>
<reference key="8">
    <citation type="journal article" date="2008" name="Proc. Natl. Acad. Sci. U.S.A.">
        <title>A quantitative atlas of mitotic phosphorylation.</title>
        <authorList>
            <person name="Dephoure N."/>
            <person name="Zhou C."/>
            <person name="Villen J."/>
            <person name="Beausoleil S.A."/>
            <person name="Bakalarski C.E."/>
            <person name="Elledge S.J."/>
            <person name="Gygi S.P."/>
        </authorList>
    </citation>
    <scope>IDENTIFICATION BY MASS SPECTROMETRY [LARGE SCALE ANALYSIS]</scope>
    <source>
        <tissue>Cervix carcinoma</tissue>
    </source>
</reference>
<reference key="9">
    <citation type="journal article" date="2011" name="BMC Syst. Biol.">
        <title>Initial characterization of the human central proteome.</title>
        <authorList>
            <person name="Burkard T.R."/>
            <person name="Planyavsky M."/>
            <person name="Kaupe I."/>
            <person name="Breitwieser F.P."/>
            <person name="Buerckstuemmer T."/>
            <person name="Bennett K.L."/>
            <person name="Superti-Furga G."/>
            <person name="Colinge J."/>
        </authorList>
    </citation>
    <scope>IDENTIFICATION BY MASS SPECTROMETRY [LARGE SCALE ANALYSIS]</scope>
</reference>
<reference key="10">
    <citation type="journal article" date="2012" name="Mol. Cell. Proteomics">
        <title>Comparative large-scale characterisation of plant vs. mammal proteins reveals similar and idiosyncratic N-alpha acetylation features.</title>
        <authorList>
            <person name="Bienvenut W.V."/>
            <person name="Sumpton D."/>
            <person name="Martinez A."/>
            <person name="Lilla S."/>
            <person name="Espagne C."/>
            <person name="Meinnel T."/>
            <person name="Giglione C."/>
        </authorList>
    </citation>
    <scope>ACETYLATION [LARGE SCALE ANALYSIS] AT MET-1</scope>
    <scope>IDENTIFICATION BY MASS SPECTROMETRY [LARGE SCALE ANALYSIS]</scope>
</reference>
<reference key="11">
    <citation type="journal article" date="2013" name="J. Proteome Res.">
        <title>Toward a comprehensive characterization of a human cancer cell phosphoproteome.</title>
        <authorList>
            <person name="Zhou H."/>
            <person name="Di Palma S."/>
            <person name="Preisinger C."/>
            <person name="Peng M."/>
            <person name="Polat A.N."/>
            <person name="Heck A.J."/>
            <person name="Mohammed S."/>
        </authorList>
    </citation>
    <scope>PHOSPHORYLATION [LARGE SCALE ANALYSIS] AT SER-43</scope>
    <scope>IDENTIFICATION BY MASS SPECTROMETRY [LARGE SCALE ANALYSIS]</scope>
    <source>
        <tissue>Cervix carcinoma</tissue>
        <tissue>Erythroleukemia</tissue>
    </source>
</reference>
<reference key="12">
    <citation type="journal article" date="2014" name="J. Proteomics">
        <title>An enzyme assisted RP-RPLC approach for in-depth analysis of human liver phosphoproteome.</title>
        <authorList>
            <person name="Bian Y."/>
            <person name="Song C."/>
            <person name="Cheng K."/>
            <person name="Dong M."/>
            <person name="Wang F."/>
            <person name="Huang J."/>
            <person name="Sun D."/>
            <person name="Wang L."/>
            <person name="Ye M."/>
            <person name="Zou H."/>
        </authorList>
    </citation>
    <scope>IDENTIFICATION BY MASS SPECTROMETRY [LARGE SCALE ANALYSIS]</scope>
    <source>
        <tissue>Liver</tissue>
    </source>
</reference>
<reference evidence="13" key="13">
    <citation type="journal article" date="2016" name="PLoS ONE">
        <title>Crystal structure of human myotubularin-related protein 1 provides insight into the structural basis of substrate specificity.</title>
        <authorList>
            <person name="Bong S.M."/>
            <person name="Son K.B."/>
            <person name="Yang S.W."/>
            <person name="Park J.W."/>
            <person name="Cho J.W."/>
            <person name="Kim K.T."/>
            <person name="Kim H."/>
            <person name="Kim S.J."/>
            <person name="Kim Y.J."/>
            <person name="Lee B.I."/>
        </authorList>
    </citation>
    <scope>X-RAY CRYSTALLOGRAPHY (2.07 ANGSTROMS) OF 95-665 OF MUTANT SER-438 IN COMPLEX WITH PHOSPHATE IONS</scope>
    <scope>CATALYTIC ACTIVITY</scope>
    <scope>FUNCTION</scope>
    <scope>SUBUNIT</scope>
    <scope>DOMAIN</scope>
    <scope>MUTAGENESIS OF CYS-438; ASP-443; ARG-444 AND ARG-484</scope>
    <scope>ACTIVE SITE</scope>
</reference>
<proteinExistence type="evidence at protein level"/>
<dbReference type="EC" id="3.1.3.-" evidence="7 8"/>
<dbReference type="EC" id="3.1.3.95" evidence="8"/>
<dbReference type="EMBL" id="AF002223">
    <property type="status" value="NOT_ANNOTATED_CDS"/>
    <property type="molecule type" value="Genomic_DNA"/>
</dbReference>
<dbReference type="EMBL" id="CH471169">
    <property type="protein sequence ID" value="EAW99384.1"/>
    <property type="molecule type" value="Genomic_DNA"/>
</dbReference>
<dbReference type="EMBL" id="CH471169">
    <property type="protein sequence ID" value="EAW99388.1"/>
    <property type="molecule type" value="Genomic_DNA"/>
</dbReference>
<dbReference type="EMBL" id="AJ224979">
    <property type="protein sequence ID" value="CAA12271.1"/>
    <property type="molecule type" value="mRNA"/>
</dbReference>
<dbReference type="EMBL" id="AF057354">
    <property type="protein sequence ID" value="AAD40368.1"/>
    <property type="molecule type" value="mRNA"/>
</dbReference>
<dbReference type="EMBL" id="U58032">
    <property type="protein sequence ID" value="AAC79117.1"/>
    <property type="molecule type" value="mRNA"/>
</dbReference>
<dbReference type="CCDS" id="CCDS14695.1">
    <molecule id="Q13613-1"/>
</dbReference>
<dbReference type="RefSeq" id="NP_003819.1">
    <molecule id="Q13613-1"/>
    <property type="nucleotide sequence ID" value="NM_003828.5"/>
</dbReference>
<dbReference type="RefSeq" id="XP_006724918.1">
    <molecule id="Q13613-1"/>
    <property type="nucleotide sequence ID" value="XM_006724855.4"/>
</dbReference>
<dbReference type="RefSeq" id="XP_054184016.1">
    <molecule id="Q13613-1"/>
    <property type="nucleotide sequence ID" value="XM_054328041.1"/>
</dbReference>
<dbReference type="PDB" id="5C16">
    <property type="method" value="X-ray"/>
    <property type="resolution" value="2.07 A"/>
    <property type="chains" value="A/B/C/D=95-665"/>
</dbReference>
<dbReference type="PDBsum" id="5C16"/>
<dbReference type="SMR" id="Q13613"/>
<dbReference type="BioGRID" id="114306">
    <property type="interactions" value="112"/>
</dbReference>
<dbReference type="FunCoup" id="Q13613">
    <property type="interactions" value="1529"/>
</dbReference>
<dbReference type="IntAct" id="Q13613">
    <property type="interactions" value="58"/>
</dbReference>
<dbReference type="MINT" id="Q13613"/>
<dbReference type="STRING" id="9606.ENSP00000414178"/>
<dbReference type="SwissLipids" id="SLP:000001136"/>
<dbReference type="DEPOD" id="MTMR1"/>
<dbReference type="GlyCosmos" id="Q13613">
    <property type="glycosylation" value="2 sites, 2 glycans"/>
</dbReference>
<dbReference type="GlyGen" id="Q13613">
    <property type="glycosylation" value="2 sites, 2 O-linked glycans (2 sites)"/>
</dbReference>
<dbReference type="iPTMnet" id="Q13613"/>
<dbReference type="PhosphoSitePlus" id="Q13613"/>
<dbReference type="SwissPalm" id="Q13613"/>
<dbReference type="BioMuta" id="MTMR1"/>
<dbReference type="DMDM" id="33112667"/>
<dbReference type="jPOST" id="Q13613"/>
<dbReference type="MassIVE" id="Q13613"/>
<dbReference type="PaxDb" id="9606-ENSP00000359417"/>
<dbReference type="PeptideAtlas" id="Q13613"/>
<dbReference type="ProteomicsDB" id="59598">
    <molecule id="Q13613-1"/>
</dbReference>
<dbReference type="ProteomicsDB" id="59599">
    <molecule id="Q13613-2"/>
</dbReference>
<dbReference type="Pumba" id="Q13613"/>
<dbReference type="Antibodypedia" id="442">
    <property type="antibodies" value="100 antibodies from 24 providers"/>
</dbReference>
<dbReference type="DNASU" id="8776"/>
<dbReference type="Ensembl" id="ENST00000370390.7">
    <molecule id="Q13613-1"/>
    <property type="protein sequence ID" value="ENSP00000359417.3"/>
    <property type="gene ID" value="ENSG00000063601.17"/>
</dbReference>
<dbReference type="Ensembl" id="ENST00000485376.5">
    <molecule id="Q13613-2"/>
    <property type="protein sequence ID" value="ENSP00000434105.1"/>
    <property type="gene ID" value="ENSG00000063601.17"/>
</dbReference>
<dbReference type="GeneID" id="8776"/>
<dbReference type="KEGG" id="hsa:8776"/>
<dbReference type="UCSC" id="uc004fei.4">
    <molecule id="Q13613-1"/>
    <property type="organism name" value="human"/>
</dbReference>
<dbReference type="AGR" id="HGNC:7449"/>
<dbReference type="CTD" id="8776"/>
<dbReference type="DisGeNET" id="8776"/>
<dbReference type="GeneCards" id="MTMR1"/>
<dbReference type="HGNC" id="HGNC:7449">
    <property type="gene designation" value="MTMR1"/>
</dbReference>
<dbReference type="HPA" id="ENSG00000063601">
    <property type="expression patterns" value="Low tissue specificity"/>
</dbReference>
<dbReference type="MIM" id="300171">
    <property type="type" value="gene"/>
</dbReference>
<dbReference type="neXtProt" id="NX_Q13613"/>
<dbReference type="OpenTargets" id="ENSG00000063601"/>
<dbReference type="PharmGKB" id="PA31252"/>
<dbReference type="VEuPathDB" id="HostDB:ENSG00000063601"/>
<dbReference type="eggNOG" id="KOG4471">
    <property type="taxonomic scope" value="Eukaryota"/>
</dbReference>
<dbReference type="GeneTree" id="ENSGT00940000153669"/>
<dbReference type="InParanoid" id="Q13613"/>
<dbReference type="OrthoDB" id="271628at2759"/>
<dbReference type="PAN-GO" id="Q13613">
    <property type="GO annotations" value="5 GO annotations based on evolutionary models"/>
</dbReference>
<dbReference type="PhylomeDB" id="Q13613"/>
<dbReference type="TreeFam" id="TF315197"/>
<dbReference type="BRENDA" id="3.1.3.95">
    <property type="organism ID" value="2681"/>
</dbReference>
<dbReference type="PathwayCommons" id="Q13613"/>
<dbReference type="Reactome" id="R-HSA-1660499">
    <property type="pathway name" value="Synthesis of PIPs at the plasma membrane"/>
</dbReference>
<dbReference type="Reactome" id="R-HSA-9035034">
    <property type="pathway name" value="RHOF GTPase cycle"/>
</dbReference>
<dbReference type="SignaLink" id="Q13613"/>
<dbReference type="SIGNOR" id="Q13613"/>
<dbReference type="BioGRID-ORCS" id="8776">
    <property type="hits" value="13 hits in 798 CRISPR screens"/>
</dbReference>
<dbReference type="ChiTaRS" id="MTMR1">
    <property type="organism name" value="human"/>
</dbReference>
<dbReference type="EvolutionaryTrace" id="Q13613"/>
<dbReference type="GeneWiki" id="MTMR1"/>
<dbReference type="GenomeRNAi" id="8776"/>
<dbReference type="Pharos" id="Q13613">
    <property type="development level" value="Tbio"/>
</dbReference>
<dbReference type="PRO" id="PR:Q13613"/>
<dbReference type="Proteomes" id="UP000005640">
    <property type="component" value="Chromosome X"/>
</dbReference>
<dbReference type="RNAct" id="Q13613">
    <property type="molecule type" value="protein"/>
</dbReference>
<dbReference type="Bgee" id="ENSG00000063601">
    <property type="expression patterns" value="Expressed in secondary oocyte and 213 other cell types or tissues"/>
</dbReference>
<dbReference type="ExpressionAtlas" id="Q13613">
    <property type="expression patterns" value="baseline and differential"/>
</dbReference>
<dbReference type="GO" id="GO:0005737">
    <property type="term" value="C:cytoplasm"/>
    <property type="evidence" value="ECO:0000314"/>
    <property type="project" value="UniProtKB"/>
</dbReference>
<dbReference type="GO" id="GO:0005829">
    <property type="term" value="C:cytosol"/>
    <property type="evidence" value="ECO:0000304"/>
    <property type="project" value="Reactome"/>
</dbReference>
<dbReference type="GO" id="GO:0016020">
    <property type="term" value="C:membrane"/>
    <property type="evidence" value="ECO:0000318"/>
    <property type="project" value="GO_Central"/>
</dbReference>
<dbReference type="GO" id="GO:0005886">
    <property type="term" value="C:plasma membrane"/>
    <property type="evidence" value="ECO:0000250"/>
    <property type="project" value="UniProtKB"/>
</dbReference>
<dbReference type="GO" id="GO:0052629">
    <property type="term" value="F:phosphatidylinositol-3,5-bisphosphate 3-phosphatase activity"/>
    <property type="evidence" value="ECO:0000314"/>
    <property type="project" value="UniProtKB"/>
</dbReference>
<dbReference type="GO" id="GO:0004438">
    <property type="term" value="F:phosphatidylinositol-3-phosphate phosphatase activity"/>
    <property type="evidence" value="ECO:0000314"/>
    <property type="project" value="UniProtKB"/>
</dbReference>
<dbReference type="GO" id="GO:0042803">
    <property type="term" value="F:protein homodimerization activity"/>
    <property type="evidence" value="ECO:0000353"/>
    <property type="project" value="UniProtKB"/>
</dbReference>
<dbReference type="GO" id="GO:0006661">
    <property type="term" value="P:phosphatidylinositol biosynthetic process"/>
    <property type="evidence" value="ECO:0000304"/>
    <property type="project" value="Reactome"/>
</dbReference>
<dbReference type="GO" id="GO:0046856">
    <property type="term" value="P:phosphatidylinositol dephosphorylation"/>
    <property type="evidence" value="ECO:0000314"/>
    <property type="project" value="UniProtKB"/>
</dbReference>
<dbReference type="GO" id="GO:0031648">
    <property type="term" value="P:protein destabilization"/>
    <property type="evidence" value="ECO:0000315"/>
    <property type="project" value="DisProt"/>
</dbReference>
<dbReference type="GO" id="GO:0060304">
    <property type="term" value="P:regulation of phosphatidylinositol dephosphorylation"/>
    <property type="evidence" value="ECO:0000314"/>
    <property type="project" value="UniProtKB"/>
</dbReference>
<dbReference type="CDD" id="cd13358">
    <property type="entry name" value="PH-GRAM_MTMR1"/>
    <property type="match status" value="1"/>
</dbReference>
<dbReference type="CDD" id="cd14592">
    <property type="entry name" value="PTP-MTMR1"/>
    <property type="match status" value="1"/>
</dbReference>
<dbReference type="FunFam" id="2.30.29.30:FF:000038">
    <property type="entry name" value="Myotubularin 1, isoform CRA_a"/>
    <property type="match status" value="1"/>
</dbReference>
<dbReference type="Gene3D" id="2.30.29.30">
    <property type="entry name" value="Pleckstrin-homology domain (PH domain)/Phosphotyrosine-binding domain (PTB)"/>
    <property type="match status" value="1"/>
</dbReference>
<dbReference type="InterPro" id="IPR004182">
    <property type="entry name" value="GRAM"/>
</dbReference>
<dbReference type="InterPro" id="IPR037857">
    <property type="entry name" value="MTMR1_PH-GRAM"/>
</dbReference>
<dbReference type="InterPro" id="IPR030587">
    <property type="entry name" value="MTMR1_PTP"/>
</dbReference>
<dbReference type="InterPro" id="IPR030564">
    <property type="entry name" value="Myotubularin"/>
</dbReference>
<dbReference type="InterPro" id="IPR010569">
    <property type="entry name" value="Myotubularin-like_Pase_dom"/>
</dbReference>
<dbReference type="InterPro" id="IPR011993">
    <property type="entry name" value="PH-like_dom_sf"/>
</dbReference>
<dbReference type="InterPro" id="IPR029021">
    <property type="entry name" value="Prot-tyrosine_phosphatase-like"/>
</dbReference>
<dbReference type="InterPro" id="IPR016130">
    <property type="entry name" value="Tyr_Pase_AS"/>
</dbReference>
<dbReference type="InterPro" id="IPR003595">
    <property type="entry name" value="Tyr_Pase_cat"/>
</dbReference>
<dbReference type="InterPro" id="IPR000387">
    <property type="entry name" value="Tyr_Pase_dom"/>
</dbReference>
<dbReference type="PANTHER" id="PTHR10807">
    <property type="entry name" value="MYOTUBULARIN-RELATED"/>
    <property type="match status" value="1"/>
</dbReference>
<dbReference type="PANTHER" id="PTHR10807:SF40">
    <property type="entry name" value="MYOTUBULARIN-RELATED PROTEIN 1"/>
    <property type="match status" value="1"/>
</dbReference>
<dbReference type="Pfam" id="PF02893">
    <property type="entry name" value="GRAM"/>
    <property type="match status" value="1"/>
</dbReference>
<dbReference type="Pfam" id="PF06602">
    <property type="entry name" value="Myotub-related"/>
    <property type="match status" value="1"/>
</dbReference>
<dbReference type="SMART" id="SM00568">
    <property type="entry name" value="GRAM"/>
    <property type="match status" value="1"/>
</dbReference>
<dbReference type="SMART" id="SM00404">
    <property type="entry name" value="PTPc_motif"/>
    <property type="match status" value="1"/>
</dbReference>
<dbReference type="SUPFAM" id="SSF52799">
    <property type="entry name" value="(Phosphotyrosine protein) phosphatases II"/>
    <property type="match status" value="1"/>
</dbReference>
<dbReference type="SUPFAM" id="SSF50729">
    <property type="entry name" value="PH domain-like"/>
    <property type="match status" value="1"/>
</dbReference>
<dbReference type="PROSITE" id="PS51339">
    <property type="entry name" value="PPASE_MYOTUBULARIN"/>
    <property type="match status" value="1"/>
</dbReference>
<dbReference type="PROSITE" id="PS00383">
    <property type="entry name" value="TYR_PHOSPHATASE_1"/>
    <property type="match status" value="1"/>
</dbReference>
<dbReference type="PROSITE" id="PS50056">
    <property type="entry name" value="TYR_PHOSPHATASE_2"/>
    <property type="match status" value="1"/>
</dbReference>
<gene>
    <name evidence="12" type="primary">MTMR1</name>
</gene>
<sequence>MDRPAAAAAAGCEGGGGPNPGPAGGRRPPRAAGGATAGSRQPSVETLDSPTGSHVEWCKQLIAATISSQISGSVTSENVSRDYKALRDGNKLAQMEEAPLFPGESIKAIVKDVMYICPFMGAVSGTLTVTDFKLYFKNVERDPHFILDVPLGVISRVEKIGAQSHGDNSCGIEIVCKDMRNLRLAYKQEEQSKLGIFENLNKHAFPLSNGQALFAFSYKEKFPINGWKVYDPVSEYKRQGLPNESWKISKINSNYEFCDTYPAIIVVPTSVKDDDLSKVAAFRAKGRVPVLSWIHPESQATITRCSQPLVGPNDKRCKEDEKYLQTIMDANAQSHKLIIFDARQNSVADTNKTKGGGYESESAYPNAELVFLEIHNIHVMRESLRKLKEIVYPSIDEARWLSNVDGTHWLEYIRMLLAGAVRIADKIESGKTSVVVHCSDGWDRTAQLTSLAMLMLDSYYRTIKGFETLVEKEWISFGHRFALRVGHGNDNHADADRSPIFLQFVDCVWQMTRQFPSAFEFNELFLITILDHLYSCLFGTFLCNCEQQRFKEDVYTKTISLWSYINSQLDEFSNPFFVNYENHVLYPVASLSHLELWVNYYVRWNPRMRPQMPIHQNLKELLAVRAELQKRVEGLQREVATRAVSSSSERGSSPSHSATSVHTSV</sequence>
<evidence type="ECO:0000250" key="1">
    <source>
        <dbReference type="UniProtKB" id="Q13614"/>
    </source>
</evidence>
<evidence type="ECO:0000250" key="2">
    <source>
        <dbReference type="UniProtKB" id="Q9Z2C4"/>
    </source>
</evidence>
<evidence type="ECO:0000255" key="3"/>
<evidence type="ECO:0000255" key="4">
    <source>
        <dbReference type="PROSITE-ProRule" id="PRU00669"/>
    </source>
</evidence>
<evidence type="ECO:0000255" key="5">
    <source>
        <dbReference type="PROSITE-ProRule" id="PRU10044"/>
    </source>
</evidence>
<evidence type="ECO:0000256" key="6">
    <source>
        <dbReference type="SAM" id="MobiDB-lite"/>
    </source>
</evidence>
<evidence type="ECO:0000269" key="7">
    <source>
    </source>
</evidence>
<evidence type="ECO:0000269" key="8">
    <source>
    </source>
</evidence>
<evidence type="ECO:0000305" key="9"/>
<evidence type="ECO:0000305" key="10">
    <source>
    </source>
</evidence>
<evidence type="ECO:0000305" key="11">
    <source>
    </source>
</evidence>
<evidence type="ECO:0000312" key="12">
    <source>
        <dbReference type="HGNC" id="HGNC:7449"/>
    </source>
</evidence>
<evidence type="ECO:0007744" key="13">
    <source>
        <dbReference type="PDB" id="5C16"/>
    </source>
</evidence>
<evidence type="ECO:0007744" key="14">
    <source>
    </source>
</evidence>
<evidence type="ECO:0007744" key="15">
    <source>
    </source>
</evidence>
<evidence type="ECO:0007829" key="16">
    <source>
        <dbReference type="PDB" id="5C16"/>
    </source>
</evidence>
<accession>Q13613</accession>
<accession>A0A024RC07</accession>
<accession>Q9UBX6</accession>
<accession>Q9UEM0</accession>
<accession>Q9UQD5</accession>
<comment type="function">
    <text evidence="7 8">Lipid phosphatase that specifically dephosphorylates the D-3 position of phosphatidylinositol 3-phosphate, generating phosphatidylinositol (PubMed:11733541, PubMed:27018598). Could also dephosphorylate phosphatidylinositol 3,5-bisphosphate to produce phosphatidylinositol 5-phosphate (PubMed:27018598).</text>
</comment>
<comment type="catalytic activity">
    <reaction evidence="7 8">
        <text>a 1,2-diacyl-sn-glycero-3-phospho-(1D-myo-inositol-3-phosphate) + H2O = a 1,2-diacyl-sn-glycero-3-phospho-(1D-myo-inositol) + phosphate</text>
        <dbReference type="Rhea" id="RHEA:12316"/>
        <dbReference type="ChEBI" id="CHEBI:15377"/>
        <dbReference type="ChEBI" id="CHEBI:43474"/>
        <dbReference type="ChEBI" id="CHEBI:57880"/>
        <dbReference type="ChEBI" id="CHEBI:58088"/>
    </reaction>
</comment>
<comment type="catalytic activity">
    <reaction evidence="7">
        <text>1,2-dioctanoyl-sn-glycero-3-phospho-(1-D-myo-inositol-3-phosphate) + H2O = 1,2-dioctanoyl-sn-glycero-3-phospho-(1D-myo-inositol) + phosphate</text>
        <dbReference type="Rhea" id="RHEA:42328"/>
        <dbReference type="ChEBI" id="CHEBI:15377"/>
        <dbReference type="ChEBI" id="CHEBI:43474"/>
        <dbReference type="ChEBI" id="CHEBI:65221"/>
        <dbReference type="ChEBI" id="CHEBI:78934"/>
    </reaction>
</comment>
<comment type="catalytic activity">
    <reaction evidence="8">
        <text>a 1,2-diacyl-sn-glycero-3-phospho-(1D-myo-inositol-3,5-bisphosphate) + H2O = a 1,2-diacyl-sn-glycero-3-phospho-(1D-myo-inositol-5-phosphate) + phosphate</text>
        <dbReference type="Rhea" id="RHEA:39019"/>
        <dbReference type="ChEBI" id="CHEBI:15377"/>
        <dbReference type="ChEBI" id="CHEBI:43474"/>
        <dbReference type="ChEBI" id="CHEBI:57795"/>
        <dbReference type="ChEBI" id="CHEBI:57923"/>
        <dbReference type="EC" id="3.1.3.95"/>
    </reaction>
</comment>
<comment type="subunit">
    <text evidence="8">Homodimer.</text>
</comment>
<comment type="subcellular location">
    <subcellularLocation>
        <location evidence="2">Cell membrane</location>
        <topology evidence="2">Peripheral membrane protein</topology>
        <orientation evidence="2">Cytoplasmic side</orientation>
    </subcellularLocation>
    <subcellularLocation>
        <location evidence="2">Cytoplasm</location>
    </subcellularLocation>
</comment>
<comment type="alternative products">
    <event type="alternative splicing"/>
    <isoform>
        <id>Q13613-1</id>
        <name>1</name>
        <sequence type="displayed"/>
    </isoform>
    <isoform>
        <id>Q13613-2</id>
        <name>1A</name>
        <sequence type="described" ref="VSP_005169 VSP_005170"/>
    </isoform>
</comment>
<comment type="domain">
    <text evidence="8">The C-terminal region is required for dimerization.</text>
</comment>
<comment type="similarity">
    <text evidence="9">Belongs to the protein-tyrosine phosphatase family. Non-receptor class myotubularin subfamily.</text>
</comment>
<comment type="caution">
    <text evidence="7">The activity toward phosphatidylinositol (3,5)-bisphosphate is controversial as it was also tested in vitro by Kim et al., but was not detected.</text>
</comment>
<protein>
    <recommendedName>
        <fullName evidence="10">Phosphatidylinositol-3-phosphate phosphatase MTMR1</fullName>
        <ecNumber evidence="7 8">3.1.3.-</ecNumber>
    </recommendedName>
    <alternativeName>
        <fullName evidence="12">Myotubularin-related protein 1</fullName>
    </alternativeName>
    <alternativeName>
        <fullName evidence="11">Phosphatidylinositol-3,5-bisphosphate 3-phosphatase</fullName>
        <ecNumber evidence="8">3.1.3.95</ecNumber>
    </alternativeName>
</protein>
<keyword id="KW-0002">3D-structure</keyword>
<keyword id="KW-0007">Acetylation</keyword>
<keyword id="KW-0025">Alternative splicing</keyword>
<keyword id="KW-1003">Cell membrane</keyword>
<keyword id="KW-0963">Cytoplasm</keyword>
<keyword id="KW-0378">Hydrolase</keyword>
<keyword id="KW-0443">Lipid metabolism</keyword>
<keyword id="KW-0472">Membrane</keyword>
<keyword id="KW-0597">Phosphoprotein</keyword>
<keyword id="KW-1267">Proteomics identification</keyword>
<keyword id="KW-1185">Reference proteome</keyword>
<name>MTMR1_HUMAN</name>